<name>RL10E_METM7</name>
<reference key="1">
    <citation type="submission" date="2007-06" db="EMBL/GenBank/DDBJ databases">
        <title>Complete sequence of Methanococcus maripaludis C7.</title>
        <authorList>
            <consortium name="US DOE Joint Genome Institute"/>
            <person name="Copeland A."/>
            <person name="Lucas S."/>
            <person name="Lapidus A."/>
            <person name="Barry K."/>
            <person name="Glavina del Rio T."/>
            <person name="Dalin E."/>
            <person name="Tice H."/>
            <person name="Pitluck S."/>
            <person name="Clum A."/>
            <person name="Schmutz J."/>
            <person name="Larimer F."/>
            <person name="Land M."/>
            <person name="Hauser L."/>
            <person name="Kyrpides N."/>
            <person name="Anderson I."/>
            <person name="Sieprawska-Lupa M."/>
            <person name="Whitman W.B."/>
            <person name="Richardson P."/>
        </authorList>
    </citation>
    <scope>NUCLEOTIDE SEQUENCE [LARGE SCALE GENOMIC DNA]</scope>
    <source>
        <strain>C7 / ATCC BAA-1331</strain>
    </source>
</reference>
<dbReference type="EMBL" id="CP000745">
    <property type="protein sequence ID" value="ABR65602.1"/>
    <property type="molecule type" value="Genomic_DNA"/>
</dbReference>
<dbReference type="SMR" id="A6VGM6"/>
<dbReference type="STRING" id="426368.MmarC7_0534"/>
<dbReference type="KEGG" id="mmz:MmarC7_0534"/>
<dbReference type="eggNOG" id="arCOG04113">
    <property type="taxonomic scope" value="Archaea"/>
</dbReference>
<dbReference type="HOGENOM" id="CLU_084051_0_2_2"/>
<dbReference type="OrthoDB" id="30538at2157"/>
<dbReference type="GO" id="GO:1990904">
    <property type="term" value="C:ribonucleoprotein complex"/>
    <property type="evidence" value="ECO:0007669"/>
    <property type="project" value="UniProtKB-KW"/>
</dbReference>
<dbReference type="GO" id="GO:0005840">
    <property type="term" value="C:ribosome"/>
    <property type="evidence" value="ECO:0007669"/>
    <property type="project" value="UniProtKB-KW"/>
</dbReference>
<dbReference type="GO" id="GO:0003735">
    <property type="term" value="F:structural constituent of ribosome"/>
    <property type="evidence" value="ECO:0007669"/>
    <property type="project" value="InterPro"/>
</dbReference>
<dbReference type="GO" id="GO:0006412">
    <property type="term" value="P:translation"/>
    <property type="evidence" value="ECO:0007669"/>
    <property type="project" value="UniProtKB-UniRule"/>
</dbReference>
<dbReference type="CDD" id="cd01433">
    <property type="entry name" value="Ribosomal_L16_L10e"/>
    <property type="match status" value="1"/>
</dbReference>
<dbReference type="Gene3D" id="3.90.1170.10">
    <property type="entry name" value="Ribosomal protein L10e/L16"/>
    <property type="match status" value="1"/>
</dbReference>
<dbReference type="HAMAP" id="MF_00448">
    <property type="entry name" value="Ribosomal_uL16_arch"/>
    <property type="match status" value="1"/>
</dbReference>
<dbReference type="InterPro" id="IPR047873">
    <property type="entry name" value="Ribosomal_uL16"/>
</dbReference>
<dbReference type="InterPro" id="IPR022981">
    <property type="entry name" value="Ribosomal_uL16_arc"/>
</dbReference>
<dbReference type="InterPro" id="IPR018255">
    <property type="entry name" value="Ribosomal_uL16_CS_euk_arc"/>
</dbReference>
<dbReference type="InterPro" id="IPR016180">
    <property type="entry name" value="Ribosomal_uL16_dom"/>
</dbReference>
<dbReference type="InterPro" id="IPR001197">
    <property type="entry name" value="Ribosomal_uL16_euk_arch"/>
</dbReference>
<dbReference type="InterPro" id="IPR036920">
    <property type="entry name" value="Ribosomal_uL16_sf"/>
</dbReference>
<dbReference type="NCBIfam" id="NF003239">
    <property type="entry name" value="PRK04199.1-4"/>
    <property type="match status" value="1"/>
</dbReference>
<dbReference type="NCBIfam" id="TIGR00279">
    <property type="entry name" value="uL16_euk_arch"/>
    <property type="match status" value="1"/>
</dbReference>
<dbReference type="PANTHER" id="PTHR11726">
    <property type="entry name" value="60S RIBOSOMAL PROTEIN L10"/>
    <property type="match status" value="1"/>
</dbReference>
<dbReference type="Pfam" id="PF00252">
    <property type="entry name" value="Ribosomal_L16"/>
    <property type="match status" value="1"/>
</dbReference>
<dbReference type="PIRSF" id="PIRSF005590">
    <property type="entry name" value="Ribosomal_L10"/>
    <property type="match status" value="1"/>
</dbReference>
<dbReference type="SUPFAM" id="SSF54686">
    <property type="entry name" value="Ribosomal protein L16p/L10e"/>
    <property type="match status" value="1"/>
</dbReference>
<dbReference type="PROSITE" id="PS01257">
    <property type="entry name" value="RIBOSOMAL_L10E"/>
    <property type="match status" value="1"/>
</dbReference>
<proteinExistence type="inferred from homology"/>
<keyword id="KW-0687">Ribonucleoprotein</keyword>
<keyword id="KW-0689">Ribosomal protein</keyword>
<gene>
    <name evidence="1" type="primary">rpl10e</name>
    <name type="ordered locus">MmarC7_0534</name>
</gene>
<sequence length="173" mass="19476">MALRPARCYRTTERRSYTRKEYVRAVPQPKVVHYVMGNSSVEFPVEVQLISKSDILIRHNALESSRIAGNKYILRECGRTGYLFNIRVYPHEILRENKMAAGAGADRISDGMRLSFGKAVGTAAKVKKGQEIITIGVNPEKFYAAKEALRRCSMKLPTACKIVVTKGQDLIRD</sequence>
<evidence type="ECO:0000255" key="1">
    <source>
        <dbReference type="HAMAP-Rule" id="MF_00448"/>
    </source>
</evidence>
<evidence type="ECO:0000305" key="2"/>
<organism>
    <name type="scientific">Methanococcus maripaludis (strain C7 / ATCC BAA-1331)</name>
    <dbReference type="NCBI Taxonomy" id="426368"/>
    <lineage>
        <taxon>Archaea</taxon>
        <taxon>Methanobacteriati</taxon>
        <taxon>Methanobacteriota</taxon>
        <taxon>Methanomada group</taxon>
        <taxon>Methanococci</taxon>
        <taxon>Methanococcales</taxon>
        <taxon>Methanococcaceae</taxon>
        <taxon>Methanococcus</taxon>
    </lineage>
</organism>
<comment type="similarity">
    <text evidence="1">Belongs to the universal ribosomal protein uL16 family.</text>
</comment>
<accession>A6VGM6</accession>
<feature type="chain" id="PRO_1000026190" description="Large ribosomal subunit protein uL16">
    <location>
        <begin position="1"/>
        <end position="173"/>
    </location>
</feature>
<protein>
    <recommendedName>
        <fullName evidence="1">Large ribosomal subunit protein uL16</fullName>
    </recommendedName>
    <alternativeName>
        <fullName evidence="2">50S ribosomal protein L10e</fullName>
    </alternativeName>
</protein>